<feature type="chain" id="PRO_1000002961" description="Phospho-N-acetylmuramoyl-pentapeptide-transferase">
    <location>
        <begin position="1"/>
        <end position="360"/>
    </location>
</feature>
<feature type="transmembrane region" description="Helical" evidence="1">
    <location>
        <begin position="26"/>
        <end position="46"/>
    </location>
</feature>
<feature type="transmembrane region" description="Helical" evidence="1">
    <location>
        <begin position="72"/>
        <end position="92"/>
    </location>
</feature>
<feature type="transmembrane region" description="Helical" evidence="1">
    <location>
        <begin position="94"/>
        <end position="114"/>
    </location>
</feature>
<feature type="transmembrane region" description="Helical" evidence="1">
    <location>
        <begin position="132"/>
        <end position="152"/>
    </location>
</feature>
<feature type="transmembrane region" description="Helical" evidence="1">
    <location>
        <begin position="168"/>
        <end position="188"/>
    </location>
</feature>
<feature type="transmembrane region" description="Helical" evidence="1">
    <location>
        <begin position="199"/>
        <end position="219"/>
    </location>
</feature>
<feature type="transmembrane region" description="Helical" evidence="1">
    <location>
        <begin position="236"/>
        <end position="256"/>
    </location>
</feature>
<feature type="transmembrane region" description="Helical" evidence="1">
    <location>
        <begin position="263"/>
        <end position="283"/>
    </location>
</feature>
<feature type="transmembrane region" description="Helical" evidence="1">
    <location>
        <begin position="288"/>
        <end position="308"/>
    </location>
</feature>
<feature type="transmembrane region" description="Helical" evidence="1">
    <location>
        <begin position="338"/>
        <end position="358"/>
    </location>
</feature>
<gene>
    <name evidence="1" type="primary">mraY</name>
    <name type="ordered locus">CKO_03288</name>
</gene>
<proteinExistence type="inferred from homology"/>
<evidence type="ECO:0000255" key="1">
    <source>
        <dbReference type="HAMAP-Rule" id="MF_00038"/>
    </source>
</evidence>
<protein>
    <recommendedName>
        <fullName evidence="1">Phospho-N-acetylmuramoyl-pentapeptide-transferase</fullName>
        <ecNumber evidence="1">2.7.8.13</ecNumber>
    </recommendedName>
    <alternativeName>
        <fullName evidence="1">UDP-MurNAc-pentapeptide phosphotransferase</fullName>
    </alternativeName>
</protein>
<keyword id="KW-0131">Cell cycle</keyword>
<keyword id="KW-0132">Cell division</keyword>
<keyword id="KW-0997">Cell inner membrane</keyword>
<keyword id="KW-1003">Cell membrane</keyword>
<keyword id="KW-0133">Cell shape</keyword>
<keyword id="KW-0961">Cell wall biogenesis/degradation</keyword>
<keyword id="KW-0460">Magnesium</keyword>
<keyword id="KW-0472">Membrane</keyword>
<keyword id="KW-0479">Metal-binding</keyword>
<keyword id="KW-0573">Peptidoglycan synthesis</keyword>
<keyword id="KW-1185">Reference proteome</keyword>
<keyword id="KW-0808">Transferase</keyword>
<keyword id="KW-0812">Transmembrane</keyword>
<keyword id="KW-1133">Transmembrane helix</keyword>
<reference key="1">
    <citation type="submission" date="2007-08" db="EMBL/GenBank/DDBJ databases">
        <authorList>
            <consortium name="The Citrobacter koseri Genome Sequencing Project"/>
            <person name="McClelland M."/>
            <person name="Sanderson E.K."/>
            <person name="Porwollik S."/>
            <person name="Spieth J."/>
            <person name="Clifton W.S."/>
            <person name="Latreille P."/>
            <person name="Courtney L."/>
            <person name="Wang C."/>
            <person name="Pepin K."/>
            <person name="Bhonagiri V."/>
            <person name="Nash W."/>
            <person name="Johnson M."/>
            <person name="Thiruvilangam P."/>
            <person name="Wilson R."/>
        </authorList>
    </citation>
    <scope>NUCLEOTIDE SEQUENCE [LARGE SCALE GENOMIC DNA]</scope>
    <source>
        <strain>ATCC BAA-895 / CDC 4225-83 / SGSC4696</strain>
    </source>
</reference>
<accession>A8ALK9</accession>
<name>MRAY_CITK8</name>
<organism>
    <name type="scientific">Citrobacter koseri (strain ATCC BAA-895 / CDC 4225-83 / SGSC4696)</name>
    <dbReference type="NCBI Taxonomy" id="290338"/>
    <lineage>
        <taxon>Bacteria</taxon>
        <taxon>Pseudomonadati</taxon>
        <taxon>Pseudomonadota</taxon>
        <taxon>Gammaproteobacteria</taxon>
        <taxon>Enterobacterales</taxon>
        <taxon>Enterobacteriaceae</taxon>
        <taxon>Citrobacter</taxon>
    </lineage>
</organism>
<sequence length="360" mass="39922">MLVWLAEHLVKYYSGFNVFSYLTFRAIVSLLTALFISLWMGPRMIARLQKLSFGQVVRNDGPESHFSKRGTPTMGGIMILTAIVVSVLLWAYPSNPYVWCVLVVLVGYGIIGFVDDYRKVVRKDTKGLIARWKYFWMSVIALGVAFALYLAGKDTPATELVVPFFKDVMPQLGLFYVLLAYFVIVGTGNAVNLTDGLDGLAIMPTVFVAAGFALVAWATGNMNFANYLHIPYLRHAGELVIVCTAIVGAGLGFLWFNTYPAQVFMGDVGSLALGGALGIIAVLLRQEFLLVIMGGVFVVETLSVILQVGSFKLRGQRIFRMAPIHHHYELKGWPEPRVIVRFWIISLMLVLIGLATLKVR</sequence>
<dbReference type="EC" id="2.7.8.13" evidence="1"/>
<dbReference type="EMBL" id="CP000822">
    <property type="protein sequence ID" value="ABV14372.1"/>
    <property type="molecule type" value="Genomic_DNA"/>
</dbReference>
<dbReference type="RefSeq" id="WP_012134075.1">
    <property type="nucleotide sequence ID" value="NC_009792.1"/>
</dbReference>
<dbReference type="SMR" id="A8ALK9"/>
<dbReference type="STRING" id="290338.CKO_03288"/>
<dbReference type="GeneID" id="45137061"/>
<dbReference type="KEGG" id="cko:CKO_03288"/>
<dbReference type="HOGENOM" id="CLU_023982_0_0_6"/>
<dbReference type="OrthoDB" id="9805475at2"/>
<dbReference type="UniPathway" id="UPA00219"/>
<dbReference type="Proteomes" id="UP000008148">
    <property type="component" value="Chromosome"/>
</dbReference>
<dbReference type="GO" id="GO:0005886">
    <property type="term" value="C:plasma membrane"/>
    <property type="evidence" value="ECO:0007669"/>
    <property type="project" value="UniProtKB-SubCell"/>
</dbReference>
<dbReference type="GO" id="GO:0046872">
    <property type="term" value="F:metal ion binding"/>
    <property type="evidence" value="ECO:0007669"/>
    <property type="project" value="UniProtKB-KW"/>
</dbReference>
<dbReference type="GO" id="GO:0008963">
    <property type="term" value="F:phospho-N-acetylmuramoyl-pentapeptide-transferase activity"/>
    <property type="evidence" value="ECO:0007669"/>
    <property type="project" value="UniProtKB-UniRule"/>
</dbReference>
<dbReference type="GO" id="GO:0051992">
    <property type="term" value="F:UDP-N-acetylmuramoyl-L-alanyl-D-glutamyl-meso-2,6-diaminopimelyl-D-alanyl-D-alanine:undecaprenyl-phosphate transferase activity"/>
    <property type="evidence" value="ECO:0007669"/>
    <property type="project" value="RHEA"/>
</dbReference>
<dbReference type="GO" id="GO:0051301">
    <property type="term" value="P:cell division"/>
    <property type="evidence" value="ECO:0007669"/>
    <property type="project" value="UniProtKB-KW"/>
</dbReference>
<dbReference type="GO" id="GO:0071555">
    <property type="term" value="P:cell wall organization"/>
    <property type="evidence" value="ECO:0007669"/>
    <property type="project" value="UniProtKB-KW"/>
</dbReference>
<dbReference type="GO" id="GO:0009252">
    <property type="term" value="P:peptidoglycan biosynthetic process"/>
    <property type="evidence" value="ECO:0007669"/>
    <property type="project" value="UniProtKB-UniRule"/>
</dbReference>
<dbReference type="GO" id="GO:0008360">
    <property type="term" value="P:regulation of cell shape"/>
    <property type="evidence" value="ECO:0007669"/>
    <property type="project" value="UniProtKB-KW"/>
</dbReference>
<dbReference type="CDD" id="cd06852">
    <property type="entry name" value="GT_MraY"/>
    <property type="match status" value="1"/>
</dbReference>
<dbReference type="HAMAP" id="MF_00038">
    <property type="entry name" value="MraY"/>
    <property type="match status" value="1"/>
</dbReference>
<dbReference type="InterPro" id="IPR000715">
    <property type="entry name" value="Glycosyl_transferase_4"/>
</dbReference>
<dbReference type="InterPro" id="IPR003524">
    <property type="entry name" value="PNAcMuramoyl-5peptid_Trfase"/>
</dbReference>
<dbReference type="InterPro" id="IPR018480">
    <property type="entry name" value="PNAcMuramoyl-5peptid_Trfase_CS"/>
</dbReference>
<dbReference type="NCBIfam" id="TIGR00445">
    <property type="entry name" value="mraY"/>
    <property type="match status" value="1"/>
</dbReference>
<dbReference type="PANTHER" id="PTHR22926">
    <property type="entry name" value="PHOSPHO-N-ACETYLMURAMOYL-PENTAPEPTIDE-TRANSFERASE"/>
    <property type="match status" value="1"/>
</dbReference>
<dbReference type="PANTHER" id="PTHR22926:SF5">
    <property type="entry name" value="PHOSPHO-N-ACETYLMURAMOYL-PENTAPEPTIDE-TRANSFERASE HOMOLOG"/>
    <property type="match status" value="1"/>
</dbReference>
<dbReference type="Pfam" id="PF00953">
    <property type="entry name" value="Glycos_transf_4"/>
    <property type="match status" value="1"/>
</dbReference>
<dbReference type="Pfam" id="PF10555">
    <property type="entry name" value="MraY_sig1"/>
    <property type="match status" value="1"/>
</dbReference>
<dbReference type="PROSITE" id="PS01347">
    <property type="entry name" value="MRAY_1"/>
    <property type="match status" value="1"/>
</dbReference>
<dbReference type="PROSITE" id="PS01348">
    <property type="entry name" value="MRAY_2"/>
    <property type="match status" value="1"/>
</dbReference>
<comment type="function">
    <text evidence="1">Catalyzes the initial step of the lipid cycle reactions in the biosynthesis of the cell wall peptidoglycan: transfers peptidoglycan precursor phospho-MurNAc-pentapeptide from UDP-MurNAc-pentapeptide onto the lipid carrier undecaprenyl phosphate, yielding undecaprenyl-pyrophosphoryl-MurNAc-pentapeptide, known as lipid I.</text>
</comment>
<comment type="catalytic activity">
    <reaction evidence="1">
        <text>UDP-N-acetyl-alpha-D-muramoyl-L-alanyl-gamma-D-glutamyl-meso-2,6-diaminopimeloyl-D-alanyl-D-alanine + di-trans,octa-cis-undecaprenyl phosphate = di-trans,octa-cis-undecaprenyl diphospho-N-acetyl-alpha-D-muramoyl-L-alanyl-D-glutamyl-meso-2,6-diaminopimeloyl-D-alanyl-D-alanine + UMP</text>
        <dbReference type="Rhea" id="RHEA:28386"/>
        <dbReference type="ChEBI" id="CHEBI:57865"/>
        <dbReference type="ChEBI" id="CHEBI:60392"/>
        <dbReference type="ChEBI" id="CHEBI:61386"/>
        <dbReference type="ChEBI" id="CHEBI:61387"/>
        <dbReference type="EC" id="2.7.8.13"/>
    </reaction>
</comment>
<comment type="cofactor">
    <cofactor evidence="1">
        <name>Mg(2+)</name>
        <dbReference type="ChEBI" id="CHEBI:18420"/>
    </cofactor>
</comment>
<comment type="pathway">
    <text evidence="1">Cell wall biogenesis; peptidoglycan biosynthesis.</text>
</comment>
<comment type="subcellular location">
    <subcellularLocation>
        <location evidence="1">Cell inner membrane</location>
        <topology evidence="1">Multi-pass membrane protein</topology>
    </subcellularLocation>
</comment>
<comment type="similarity">
    <text evidence="1">Belongs to the glycosyltransferase 4 family. MraY subfamily.</text>
</comment>